<protein>
    <recommendedName>
        <fullName evidence="1">Urease subunit gamma</fullName>
        <ecNumber evidence="1">3.5.1.5</ecNumber>
    </recommendedName>
    <alternativeName>
        <fullName evidence="1">Urea amidohydrolase subunit gamma</fullName>
    </alternativeName>
</protein>
<reference key="1">
    <citation type="journal article" date="2008" name="J. Bacteriol.">
        <title>Genome sequence of Staphylococcus aureus strain Newman and comparative analysis of staphylococcal genomes: polymorphism and evolution of two major pathogenicity islands.</title>
        <authorList>
            <person name="Baba T."/>
            <person name="Bae T."/>
            <person name="Schneewind O."/>
            <person name="Takeuchi F."/>
            <person name="Hiramatsu K."/>
        </authorList>
    </citation>
    <scope>NUCLEOTIDE SEQUENCE [LARGE SCALE GENOMIC DNA]</scope>
    <source>
        <strain>Newman</strain>
    </source>
</reference>
<name>URE3_STAAE</name>
<organism>
    <name type="scientific">Staphylococcus aureus (strain Newman)</name>
    <dbReference type="NCBI Taxonomy" id="426430"/>
    <lineage>
        <taxon>Bacteria</taxon>
        <taxon>Bacillati</taxon>
        <taxon>Bacillota</taxon>
        <taxon>Bacilli</taxon>
        <taxon>Bacillales</taxon>
        <taxon>Staphylococcaceae</taxon>
        <taxon>Staphylococcus</taxon>
    </lineage>
</organism>
<dbReference type="EC" id="3.5.1.5" evidence="1"/>
<dbReference type="EMBL" id="AP009351">
    <property type="protein sequence ID" value="BAF68460.1"/>
    <property type="molecule type" value="Genomic_DNA"/>
</dbReference>
<dbReference type="RefSeq" id="WP_000545928.1">
    <property type="nucleotide sequence ID" value="NZ_JBBIAE010000006.1"/>
</dbReference>
<dbReference type="SMR" id="A6QJC8"/>
<dbReference type="KEGG" id="sae:NWMN_2188"/>
<dbReference type="HOGENOM" id="CLU_145825_1_0_9"/>
<dbReference type="UniPathway" id="UPA00258">
    <property type="reaction ID" value="UER00370"/>
</dbReference>
<dbReference type="Proteomes" id="UP000006386">
    <property type="component" value="Chromosome"/>
</dbReference>
<dbReference type="GO" id="GO:0005737">
    <property type="term" value="C:cytoplasm"/>
    <property type="evidence" value="ECO:0007669"/>
    <property type="project" value="UniProtKB-SubCell"/>
</dbReference>
<dbReference type="GO" id="GO:0016151">
    <property type="term" value="F:nickel cation binding"/>
    <property type="evidence" value="ECO:0007669"/>
    <property type="project" value="InterPro"/>
</dbReference>
<dbReference type="GO" id="GO:0009039">
    <property type="term" value="F:urease activity"/>
    <property type="evidence" value="ECO:0007669"/>
    <property type="project" value="UniProtKB-UniRule"/>
</dbReference>
<dbReference type="GO" id="GO:0043419">
    <property type="term" value="P:urea catabolic process"/>
    <property type="evidence" value="ECO:0007669"/>
    <property type="project" value="UniProtKB-UniRule"/>
</dbReference>
<dbReference type="CDD" id="cd00390">
    <property type="entry name" value="Urease_gamma"/>
    <property type="match status" value="1"/>
</dbReference>
<dbReference type="Gene3D" id="3.30.280.10">
    <property type="entry name" value="Urease, gamma-like subunit"/>
    <property type="match status" value="1"/>
</dbReference>
<dbReference type="HAMAP" id="MF_00739">
    <property type="entry name" value="Urease_gamma"/>
    <property type="match status" value="1"/>
</dbReference>
<dbReference type="InterPro" id="IPR012010">
    <property type="entry name" value="Urease_gamma"/>
</dbReference>
<dbReference type="InterPro" id="IPR002026">
    <property type="entry name" value="Urease_gamma/gamma-beta_su"/>
</dbReference>
<dbReference type="InterPro" id="IPR036463">
    <property type="entry name" value="Urease_gamma_sf"/>
</dbReference>
<dbReference type="InterPro" id="IPR050069">
    <property type="entry name" value="Urease_subunit"/>
</dbReference>
<dbReference type="NCBIfam" id="NF009712">
    <property type="entry name" value="PRK13241.1"/>
    <property type="match status" value="1"/>
</dbReference>
<dbReference type="NCBIfam" id="TIGR00193">
    <property type="entry name" value="urease_gam"/>
    <property type="match status" value="1"/>
</dbReference>
<dbReference type="PANTHER" id="PTHR33569">
    <property type="entry name" value="UREASE"/>
    <property type="match status" value="1"/>
</dbReference>
<dbReference type="PANTHER" id="PTHR33569:SF1">
    <property type="entry name" value="UREASE"/>
    <property type="match status" value="1"/>
</dbReference>
<dbReference type="Pfam" id="PF00547">
    <property type="entry name" value="Urease_gamma"/>
    <property type="match status" value="1"/>
</dbReference>
<dbReference type="PIRSF" id="PIRSF001223">
    <property type="entry name" value="Urease_gamma"/>
    <property type="match status" value="1"/>
</dbReference>
<dbReference type="SUPFAM" id="SSF54111">
    <property type="entry name" value="Urease, gamma-subunit"/>
    <property type="match status" value="1"/>
</dbReference>
<evidence type="ECO:0000255" key="1">
    <source>
        <dbReference type="HAMAP-Rule" id="MF_00739"/>
    </source>
</evidence>
<feature type="chain" id="PRO_1000072808" description="Urease subunit gamma">
    <location>
        <begin position="1"/>
        <end position="100"/>
    </location>
</feature>
<gene>
    <name evidence="1" type="primary">ureA</name>
    <name type="ordered locus">NWMN_2188</name>
</gene>
<sequence length="100" mass="11273">MHFTQREQDKLMIVVAAEVARRRKARGLKLNHPEALALISDELLEGARDGKTVAELMSYGRQILNKEDVMDGVEHMITDIEIEATFPDGTKLITVHHPIV</sequence>
<comment type="catalytic activity">
    <reaction evidence="1">
        <text>urea + 2 H2O + H(+) = hydrogencarbonate + 2 NH4(+)</text>
        <dbReference type="Rhea" id="RHEA:20557"/>
        <dbReference type="ChEBI" id="CHEBI:15377"/>
        <dbReference type="ChEBI" id="CHEBI:15378"/>
        <dbReference type="ChEBI" id="CHEBI:16199"/>
        <dbReference type="ChEBI" id="CHEBI:17544"/>
        <dbReference type="ChEBI" id="CHEBI:28938"/>
        <dbReference type="EC" id="3.5.1.5"/>
    </reaction>
</comment>
<comment type="pathway">
    <text evidence="1">Nitrogen metabolism; urea degradation; CO(2) and NH(3) from urea (urease route): step 1/1.</text>
</comment>
<comment type="subunit">
    <text evidence="1">Heterotrimer of UreA (gamma), UreB (beta) and UreC (alpha) subunits. Three heterotrimers associate to form the active enzyme.</text>
</comment>
<comment type="subcellular location">
    <subcellularLocation>
        <location evidence="1">Cytoplasm</location>
    </subcellularLocation>
</comment>
<comment type="similarity">
    <text evidence="1">Belongs to the urease gamma subunit family.</text>
</comment>
<proteinExistence type="inferred from homology"/>
<keyword id="KW-0963">Cytoplasm</keyword>
<keyword id="KW-0378">Hydrolase</keyword>
<accession>A6QJC8</accession>